<accession>O30181</accession>
<protein>
    <recommendedName>
        <fullName evidence="1">Phosphomevalonate dehydratase small subunit</fullName>
        <shortName evidence="1">PMDh small subunit</shortName>
        <shortName evidence="1">PMDh-S</shortName>
        <ecNumber evidence="1">4.2.1.182</ecNumber>
    </recommendedName>
</protein>
<comment type="function">
    <text evidence="1">Component of a hydro-lyase that catalyzes the dehydration of mevalonate 5-phosphate (MVA5P) to form trans-anhydromevalonate 5-phosphate (tAHMP). Involved in the archaeal mevalonate (MVA) pathway, which provides fundamental precursors for isoprenoid biosynthesis, such as isopentenyl diphosphate (IPP) and dimethylallyl diphosphate (DMAPP).</text>
</comment>
<comment type="catalytic activity">
    <reaction evidence="1">
        <text>(R)-5-phosphomevalonate = (2E)-3-methyl-5-phosphooxypent-2-enoate + H2O</text>
        <dbReference type="Rhea" id="RHEA:78975"/>
        <dbReference type="ChEBI" id="CHEBI:15377"/>
        <dbReference type="ChEBI" id="CHEBI:58146"/>
        <dbReference type="ChEBI" id="CHEBI:229665"/>
        <dbReference type="EC" id="4.2.1.182"/>
    </reaction>
    <physiologicalReaction direction="left-to-right" evidence="1">
        <dbReference type="Rhea" id="RHEA:78976"/>
    </physiologicalReaction>
</comment>
<comment type="pathway">
    <text evidence="1">Isoprenoid biosynthesis; isopentenyl diphosphate biosynthesis via mevalonate pathway.</text>
</comment>
<comment type="subunit">
    <text evidence="1">Heterodimer composed of a large subunit (PMDh-L) and a small subunit (PMDh-S).</text>
</comment>
<comment type="similarity">
    <text evidence="1">Belongs to the AcnX type II small subunit family.</text>
</comment>
<reference key="1">
    <citation type="journal article" date="1997" name="Nature">
        <title>The complete genome sequence of the hyperthermophilic, sulphate-reducing archaeon Archaeoglobus fulgidus.</title>
        <authorList>
            <person name="Klenk H.-P."/>
            <person name="Clayton R.A."/>
            <person name="Tomb J.-F."/>
            <person name="White O."/>
            <person name="Nelson K.E."/>
            <person name="Ketchum K.A."/>
            <person name="Dodson R.J."/>
            <person name="Gwinn M.L."/>
            <person name="Hickey E.K."/>
            <person name="Peterson J.D."/>
            <person name="Richardson D.L."/>
            <person name="Kerlavage A.R."/>
            <person name="Graham D.E."/>
            <person name="Kyrpides N.C."/>
            <person name="Fleischmann R.D."/>
            <person name="Quackenbush J."/>
            <person name="Lee N.H."/>
            <person name="Sutton G.G."/>
            <person name="Gill S.R."/>
            <person name="Kirkness E.F."/>
            <person name="Dougherty B.A."/>
            <person name="McKenney K."/>
            <person name="Adams M.D."/>
            <person name="Loftus B.J."/>
            <person name="Peterson S.N."/>
            <person name="Reich C.I."/>
            <person name="McNeil L.K."/>
            <person name="Badger J.H."/>
            <person name="Glodek A."/>
            <person name="Zhou L."/>
            <person name="Overbeek R."/>
            <person name="Gocayne J.D."/>
            <person name="Weidman J.F."/>
            <person name="McDonald L.A."/>
            <person name="Utterback T.R."/>
            <person name="Cotton M.D."/>
            <person name="Spriggs T."/>
            <person name="Artiach P."/>
            <person name="Kaine B.P."/>
            <person name="Sykes S.M."/>
            <person name="Sadow P.W."/>
            <person name="D'Andrea K.P."/>
            <person name="Bowman C."/>
            <person name="Fujii C."/>
            <person name="Garland S.A."/>
            <person name="Mason T.M."/>
            <person name="Olsen G.J."/>
            <person name="Fraser C.M."/>
            <person name="Smith H.O."/>
            <person name="Woese C.R."/>
            <person name="Venter J.C."/>
        </authorList>
    </citation>
    <scope>NUCLEOTIDE SEQUENCE [LARGE SCALE GENOMIC DNA]</scope>
    <source>
        <strain>ATCC 49558 / DSM 4304 / JCM 9628 / NBRC 100126 / VC-16</strain>
    </source>
</reference>
<keyword id="KW-0002">3D-structure</keyword>
<keyword id="KW-0414">Isoprene biosynthesis</keyword>
<keyword id="KW-0456">Lyase</keyword>
<keyword id="KW-1185">Reference proteome</keyword>
<organism>
    <name type="scientific">Archaeoglobus fulgidus (strain ATCC 49558 / DSM 4304 / JCM 9628 / NBRC 100126 / VC-16)</name>
    <dbReference type="NCBI Taxonomy" id="224325"/>
    <lineage>
        <taxon>Archaea</taxon>
        <taxon>Methanobacteriati</taxon>
        <taxon>Methanobacteriota</taxon>
        <taxon>Archaeoglobi</taxon>
        <taxon>Archaeoglobales</taxon>
        <taxon>Archaeoglobaceae</taxon>
        <taxon>Archaeoglobus</taxon>
    </lineage>
</organism>
<proteinExistence type="evidence at protein level"/>
<dbReference type="EC" id="4.2.1.182" evidence="1"/>
<dbReference type="EMBL" id="AE000782">
    <property type="protein sequence ID" value="AAB91166.1"/>
    <property type="molecule type" value="Genomic_DNA"/>
</dbReference>
<dbReference type="PIR" id="G69256">
    <property type="entry name" value="G69256"/>
</dbReference>
<dbReference type="PDB" id="2HI6">
    <property type="method" value="NMR"/>
    <property type="chains" value="A=2-132"/>
</dbReference>
<dbReference type="PDBsum" id="2HI6"/>
<dbReference type="BMRB" id="O30181"/>
<dbReference type="SMR" id="O30181"/>
<dbReference type="STRING" id="224325.AF_0055"/>
<dbReference type="PaxDb" id="224325-AF_0055"/>
<dbReference type="EnsemblBacteria" id="AAB91166">
    <property type="protein sequence ID" value="AAB91166"/>
    <property type="gene ID" value="AF_0055"/>
</dbReference>
<dbReference type="KEGG" id="afu:AF_0055"/>
<dbReference type="eggNOG" id="arCOG04279">
    <property type="taxonomic scope" value="Archaea"/>
</dbReference>
<dbReference type="HOGENOM" id="CLU_141583_2_0_2"/>
<dbReference type="OrthoDB" id="18062at2157"/>
<dbReference type="PhylomeDB" id="O30181"/>
<dbReference type="UniPathway" id="UPA00057"/>
<dbReference type="EvolutionaryTrace" id="O30181"/>
<dbReference type="Proteomes" id="UP000002199">
    <property type="component" value="Chromosome"/>
</dbReference>
<dbReference type="GO" id="GO:0016836">
    <property type="term" value="F:hydro-lyase activity"/>
    <property type="evidence" value="ECO:0007669"/>
    <property type="project" value="UniProtKB-UniRule"/>
</dbReference>
<dbReference type="GO" id="GO:0019287">
    <property type="term" value="P:isopentenyl diphosphate biosynthetic process, mevalonate pathway"/>
    <property type="evidence" value="ECO:0007669"/>
    <property type="project" value="UniProtKB-UniRule"/>
</dbReference>
<dbReference type="CDD" id="cd01356">
    <property type="entry name" value="AcnX_swivel"/>
    <property type="match status" value="1"/>
</dbReference>
<dbReference type="Gene3D" id="3.50.30.10">
    <property type="entry name" value="Phosphohistidine domain"/>
    <property type="match status" value="1"/>
</dbReference>
<dbReference type="HAMAP" id="MF_00078">
    <property type="entry name" value="PMDh_S"/>
    <property type="match status" value="1"/>
</dbReference>
<dbReference type="InterPro" id="IPR012016">
    <property type="entry name" value="PMDh-S-like"/>
</dbReference>
<dbReference type="InterPro" id="IPR002840">
    <property type="entry name" value="PMDh-S-like_dom"/>
</dbReference>
<dbReference type="InterPro" id="IPR020794">
    <property type="entry name" value="PMDh_S"/>
</dbReference>
<dbReference type="NCBIfam" id="NF003046">
    <property type="entry name" value="PRK03955.1"/>
    <property type="match status" value="1"/>
</dbReference>
<dbReference type="PANTHER" id="PTHR36577">
    <property type="entry name" value="DUF521 DOMAIN PROTEIN (AFU_ORTHOLOGUE AFUA_6G00490)"/>
    <property type="match status" value="1"/>
</dbReference>
<dbReference type="PANTHER" id="PTHR36577:SF3">
    <property type="entry name" value="DUF521 DOMAIN PROTEIN (AFU_ORTHOLOGUE AFUA_6G00490)"/>
    <property type="match status" value="1"/>
</dbReference>
<dbReference type="Pfam" id="PF01989">
    <property type="entry name" value="AcnX_swivel_put"/>
    <property type="match status" value="1"/>
</dbReference>
<dbReference type="PIRSF" id="PIRSF004966">
    <property type="entry name" value="UCP004966"/>
    <property type="match status" value="1"/>
</dbReference>
<dbReference type="SUPFAM" id="SSF52016">
    <property type="entry name" value="LeuD/IlvD-like"/>
    <property type="match status" value="1"/>
</dbReference>
<evidence type="ECO:0000255" key="1">
    <source>
        <dbReference type="HAMAP-Rule" id="MF_00078"/>
    </source>
</evidence>
<evidence type="ECO:0007829" key="2">
    <source>
        <dbReference type="PDB" id="2HI6"/>
    </source>
</evidence>
<sequence>MKFACRAITRGRAEGEALVTKEYISFLGGIDKETGIVKEDCEIKGESVAGRILVFPGGKGSTVGSYVLLNLRKNGVAPKAIINKKTETIIAVGAAMAEIPLVEVRDEKFFEAVKTGDRVVVNADEGYVELIE</sequence>
<name>PMDHS_ARCFU</name>
<gene>
    <name type="ordered locus">AF_0055</name>
</gene>
<feature type="chain" id="PRO_0000152563" description="Phosphomevalonate dehydratase small subunit">
    <location>
        <begin position="1"/>
        <end position="132"/>
    </location>
</feature>
<feature type="active site" description="Proton acceptor" evidence="1">
    <location>
        <position position="61"/>
    </location>
</feature>
<feature type="strand" evidence="2">
    <location>
        <begin position="2"/>
        <end position="4"/>
    </location>
</feature>
<feature type="strand" evidence="2">
    <location>
        <begin position="6"/>
        <end position="9"/>
    </location>
</feature>
<feature type="strand" evidence="2">
    <location>
        <begin position="12"/>
        <end position="19"/>
    </location>
</feature>
<feature type="turn" evidence="2">
    <location>
        <begin position="32"/>
        <end position="34"/>
    </location>
</feature>
<feature type="strand" evidence="2">
    <location>
        <begin position="41"/>
        <end position="43"/>
    </location>
</feature>
<feature type="strand" evidence="2">
    <location>
        <begin position="51"/>
        <end position="56"/>
    </location>
</feature>
<feature type="helix" evidence="2">
    <location>
        <begin position="67"/>
        <end position="74"/>
    </location>
</feature>
<feature type="strand" evidence="2">
    <location>
        <begin position="79"/>
        <end position="85"/>
    </location>
</feature>
<feature type="helix" evidence="2">
    <location>
        <begin position="88"/>
        <end position="97"/>
    </location>
</feature>
<feature type="strand" evidence="2">
    <location>
        <begin position="101"/>
        <end position="103"/>
    </location>
</feature>
<feature type="helix" evidence="2">
    <location>
        <begin position="108"/>
        <end position="112"/>
    </location>
</feature>
<feature type="strand" evidence="2">
    <location>
        <begin position="117"/>
        <end position="122"/>
    </location>
</feature>
<feature type="turn" evidence="2">
    <location>
        <begin position="123"/>
        <end position="126"/>
    </location>
</feature>
<feature type="strand" evidence="2">
    <location>
        <begin position="127"/>
        <end position="131"/>
    </location>
</feature>